<keyword id="KW-0012">Acyltransferase</keyword>
<keyword id="KW-0808">Transferase</keyword>
<evidence type="ECO:0000269" key="1">
    <source>
    </source>
</evidence>
<evidence type="ECO:0000303" key="2">
    <source>
    </source>
</evidence>
<evidence type="ECO:0000305" key="3"/>
<evidence type="ECO:0000305" key="4">
    <source>
    </source>
</evidence>
<name>ATO1_OMPOL</name>
<dbReference type="EC" id="2.3.1.-" evidence="4"/>
<dbReference type="EMBL" id="AY929616">
    <property type="protein sequence ID" value="AAX49354.1"/>
    <property type="molecule type" value="Genomic_DNA"/>
</dbReference>
<dbReference type="SMR" id="Q52UT1"/>
<dbReference type="UniPathway" id="UPA00783"/>
<dbReference type="GO" id="GO:0016410">
    <property type="term" value="F:N-acyltransferase activity"/>
    <property type="evidence" value="ECO:0007669"/>
    <property type="project" value="TreeGrafter"/>
</dbReference>
<dbReference type="GO" id="GO:0031169">
    <property type="term" value="P:ferrichrome biosynthetic process"/>
    <property type="evidence" value="ECO:0007669"/>
    <property type="project" value="UniProtKB-UniPathway"/>
</dbReference>
<dbReference type="Gene3D" id="3.40.630.30">
    <property type="match status" value="1"/>
</dbReference>
<dbReference type="InterPro" id="IPR016181">
    <property type="entry name" value="Acyl_CoA_acyltransferase"/>
</dbReference>
<dbReference type="InterPro" id="IPR019432">
    <property type="entry name" value="Acyltransferase_MbtK/IucB-like"/>
</dbReference>
<dbReference type="PANTHER" id="PTHR31438">
    <property type="entry name" value="LYSINE N-ACYLTRANSFERASE C17G9.06C-RELATED"/>
    <property type="match status" value="1"/>
</dbReference>
<dbReference type="PANTHER" id="PTHR31438:SF1">
    <property type="entry name" value="LYSINE N-ACYLTRANSFERASE C17G9.06C-RELATED"/>
    <property type="match status" value="1"/>
</dbReference>
<dbReference type="Pfam" id="PF13523">
    <property type="entry name" value="Acetyltransf_8"/>
    <property type="match status" value="1"/>
</dbReference>
<dbReference type="SMART" id="SM01006">
    <property type="entry name" value="AlcB"/>
    <property type="match status" value="1"/>
</dbReference>
<dbReference type="SUPFAM" id="SSF55729">
    <property type="entry name" value="Acyl-CoA N-acyltransferases (Nat)"/>
    <property type="match status" value="1"/>
</dbReference>
<gene>
    <name evidence="2" type="primary">ato1</name>
</gene>
<accession>Q52UT1</accession>
<comment type="function">
    <text evidence="1">L-ornithine N(5)-monooxygenase; part of the siderophore biosynthetic pathway (PubMed:16019163). Omphalotus olearius produces ferrichrome A, but no other siderophore has been detected (PubMed:16019163). Ferrichrome A consists of a hexapeptide ring made up of one glycine, two serine, and three N(5)-hydroxyornithine amino acid residues, the latter acylated by trans-(alpha-methyl)-glutaconic acid residues (PubMed:16019163). The biosynthesis of ferrichrome A depends on the hydroxylation of ornithine to N(5)-hydroxyornithine, catalyzed by the monooxygenase omo1 (PubMed:16019163). The second step, the acylation of N(5)-hydroxy-L-ornithine is probably catalyzed by the N-acyltransferase ato1 (PubMed:16019163). Finally, assembly of ferrichrome A is catalyzed by the nonribosomal peptide synthase (NRPS) fso1 (PubMed:16019163).</text>
</comment>
<comment type="pathway">
    <text evidence="4">Siderophore biosynthesis; ferrichrome biosynthesis.</text>
</comment>
<comment type="similarity">
    <text evidence="3">Belongs to the lysine N-acyltransferase mbtK family.</text>
</comment>
<proteinExistence type="inferred from homology"/>
<sequence>MTTRTSGYVREEFVAPPEHTFTLPDSTIVRSIEQDGTVEVFLAQSSAPIAIFSPHARTLRVSPHGIVNDDRAVSSPAPCFTTAEPALSTEDAWAALYALWMRRTEKDVLPLVLDSRTESLKPYLVQTGLAFSPPDAQSEFELLVVRAAFWQGAGAPVNRHWLQNMVPDPSTSIAPFPAITSFTRTEHVLTTHPLRPPKPAPGAVIYSRYIHTVNQQLTLTHIDANNLEHFAAYSRWQNSERVNIGWRERGPDEKHRKYLADRLADLHSMGVIIAWDGQLAGYGEVCWVKEDPMGTYVGGLGDYDQGIHILIGEEKFRGRHRFTAVMTSLYHACFLREPRTEVVVSEPRADLPIVPRLIAYLPQELNREFELPHKRAVYTVVRRERFFQAAMLY</sequence>
<organism>
    <name type="scientific">Omphalotus olearius</name>
    <name type="common">Jack o'lantern</name>
    <dbReference type="NCBI Taxonomy" id="72120"/>
    <lineage>
        <taxon>Eukaryota</taxon>
        <taxon>Fungi</taxon>
        <taxon>Dikarya</taxon>
        <taxon>Basidiomycota</taxon>
        <taxon>Agaricomycotina</taxon>
        <taxon>Agaricomycetes</taxon>
        <taxon>Agaricomycetidae</taxon>
        <taxon>Agaricales</taxon>
        <taxon>Marasmiineae</taxon>
        <taxon>Omphalotaceae</taxon>
        <taxon>Omphalotus</taxon>
    </lineage>
</organism>
<protein>
    <recommendedName>
        <fullName evidence="2">Acyltransferase ato1</fullName>
        <ecNumber evidence="4">2.3.1.-</ecNumber>
    </recommendedName>
    <alternativeName>
        <fullName evidence="2">Ferrichrome A biosynthesis cluster protein ato1</fullName>
    </alternativeName>
</protein>
<feature type="chain" id="PRO_0000444317" description="Acyltransferase ato1">
    <location>
        <begin position="1"/>
        <end position="393"/>
    </location>
</feature>
<reference key="1">
    <citation type="journal article" date="2005" name="FEMS Microbiol. Lett.">
        <title>Characterization of the ferrichrome A biosynthetic gene cluster in the homobasidiomycete Omphalotus olearius.</title>
        <authorList>
            <person name="Welzel K."/>
            <person name="Eisfeld K."/>
            <person name="Antelo L."/>
            <person name="Anke T."/>
            <person name="Anke H."/>
        </authorList>
    </citation>
    <scope>NUCLEOTIDE SEQUENCE [GENOMIC DNA]</scope>
    <scope>FUNCTION</scope>
    <source>
        <strain>TA90170</strain>
    </source>
</reference>